<feature type="chain" id="PRO_1000185007" description="UPF0295 protein BCA_0557">
    <location>
        <begin position="1"/>
        <end position="118"/>
    </location>
</feature>
<feature type="transmembrane region" description="Helical" evidence="1">
    <location>
        <begin position="12"/>
        <end position="32"/>
    </location>
</feature>
<feature type="transmembrane region" description="Helical" evidence="1">
    <location>
        <begin position="43"/>
        <end position="63"/>
    </location>
</feature>
<name>Y557_BACC3</name>
<comment type="subcellular location">
    <subcellularLocation>
        <location evidence="1">Cell membrane</location>
        <topology evidence="1">Multi-pass membrane protein</topology>
    </subcellularLocation>
</comment>
<comment type="similarity">
    <text evidence="1">Belongs to the UPF0295 family.</text>
</comment>
<sequence>MSIKYSNKINKIRTFALSLVFIGLFIAYLGVFFRENIIIMTTFMMVGFLAVIASTVVYFWIGMLSTKTVQIICPSCDKPTKMLGRVDACMHCNQPLTMDRDLEGKEFDEKYNKKSYKS</sequence>
<keyword id="KW-1003">Cell membrane</keyword>
<keyword id="KW-0472">Membrane</keyword>
<keyword id="KW-0812">Transmembrane</keyword>
<keyword id="KW-1133">Transmembrane helix</keyword>
<proteinExistence type="inferred from homology"/>
<reference key="1">
    <citation type="submission" date="2009-02" db="EMBL/GenBank/DDBJ databases">
        <title>Genome sequence of Bacillus cereus 03BB102.</title>
        <authorList>
            <person name="Dodson R.J."/>
            <person name="Jackson P."/>
            <person name="Munk A.C."/>
            <person name="Brettin T."/>
            <person name="Bruce D."/>
            <person name="Detter C."/>
            <person name="Tapia R."/>
            <person name="Han C."/>
            <person name="Sutton G."/>
            <person name="Sims D."/>
        </authorList>
    </citation>
    <scope>NUCLEOTIDE SEQUENCE [LARGE SCALE GENOMIC DNA]</scope>
    <source>
        <strain>03BB102</strain>
    </source>
</reference>
<gene>
    <name type="ordered locus">BCA_0557</name>
</gene>
<protein>
    <recommendedName>
        <fullName evidence="1">UPF0295 protein BCA_0557</fullName>
    </recommendedName>
</protein>
<evidence type="ECO:0000255" key="1">
    <source>
        <dbReference type="HAMAP-Rule" id="MF_01502"/>
    </source>
</evidence>
<organism>
    <name type="scientific">Bacillus cereus (strain 03BB102)</name>
    <dbReference type="NCBI Taxonomy" id="572264"/>
    <lineage>
        <taxon>Bacteria</taxon>
        <taxon>Bacillati</taxon>
        <taxon>Bacillota</taxon>
        <taxon>Bacilli</taxon>
        <taxon>Bacillales</taxon>
        <taxon>Bacillaceae</taxon>
        <taxon>Bacillus</taxon>
        <taxon>Bacillus cereus group</taxon>
    </lineage>
</organism>
<dbReference type="EMBL" id="CP001407">
    <property type="protein sequence ID" value="ACO26549.1"/>
    <property type="molecule type" value="Genomic_DNA"/>
</dbReference>
<dbReference type="RefSeq" id="WP_000025061.1">
    <property type="nucleotide sequence ID" value="NZ_CP009318.1"/>
</dbReference>
<dbReference type="KEGG" id="bcx:BCA_0557"/>
<dbReference type="PATRIC" id="fig|572264.18.peg.543"/>
<dbReference type="Proteomes" id="UP000002210">
    <property type="component" value="Chromosome"/>
</dbReference>
<dbReference type="GO" id="GO:0005886">
    <property type="term" value="C:plasma membrane"/>
    <property type="evidence" value="ECO:0007669"/>
    <property type="project" value="UniProtKB-SubCell"/>
</dbReference>
<dbReference type="HAMAP" id="MF_01502">
    <property type="entry name" value="UPF0295"/>
    <property type="match status" value="1"/>
</dbReference>
<dbReference type="InterPro" id="IPR020912">
    <property type="entry name" value="UPF0295"/>
</dbReference>
<dbReference type="NCBIfam" id="NF002796">
    <property type="entry name" value="PRK02935.1"/>
    <property type="match status" value="1"/>
</dbReference>
<dbReference type="Pfam" id="PF11023">
    <property type="entry name" value="DUF2614"/>
    <property type="match status" value="1"/>
</dbReference>
<accession>C1EWH3</accession>